<reference key="1">
    <citation type="journal article" date="1998" name="J. Biol. Chem.">
        <title>The guanosine monophosphate reductase gene is conserved in rats and its expression increases rapidly in brown adipose tissue during cold exposure.</title>
        <authorList>
            <person name="Salvatore D."/>
            <person name="Bartha T."/>
            <person name="Larsen P.R."/>
        </authorList>
    </citation>
    <scope>NUCLEOTIDE SEQUENCE [MRNA]</scope>
    <source>
        <strain>Sprague-Dawley</strain>
        <tissue>Brown adipose tissue</tissue>
    </source>
</reference>
<accession>Q9Z244</accession>
<name>GMPR1_RAT</name>
<gene>
    <name type="primary">Gmpr</name>
    <name evidence="2" type="synonym">Gmpr1</name>
</gene>
<evidence type="ECO:0000250" key="1">
    <source>
        <dbReference type="UniProtKB" id="Q9DCZ1"/>
    </source>
</evidence>
<evidence type="ECO:0000255" key="2">
    <source>
        <dbReference type="HAMAP-Rule" id="MF_03195"/>
    </source>
</evidence>
<organism>
    <name type="scientific">Rattus norvegicus</name>
    <name type="common">Rat</name>
    <dbReference type="NCBI Taxonomy" id="10116"/>
    <lineage>
        <taxon>Eukaryota</taxon>
        <taxon>Metazoa</taxon>
        <taxon>Chordata</taxon>
        <taxon>Craniata</taxon>
        <taxon>Vertebrata</taxon>
        <taxon>Euteleostomi</taxon>
        <taxon>Mammalia</taxon>
        <taxon>Eutheria</taxon>
        <taxon>Euarchontoglires</taxon>
        <taxon>Glires</taxon>
        <taxon>Rodentia</taxon>
        <taxon>Myomorpha</taxon>
        <taxon>Muroidea</taxon>
        <taxon>Muridae</taxon>
        <taxon>Murinae</taxon>
        <taxon>Rattus</taxon>
    </lineage>
</organism>
<dbReference type="EC" id="1.7.1.7" evidence="2"/>
<dbReference type="EMBL" id="AF090867">
    <property type="protein sequence ID" value="AAC78657.1"/>
    <property type="molecule type" value="mRNA"/>
</dbReference>
<dbReference type="RefSeq" id="NP_476536.1">
    <property type="nucleotide sequence ID" value="NM_057188.1"/>
</dbReference>
<dbReference type="SMR" id="Q9Z244"/>
<dbReference type="FunCoup" id="Q9Z244">
    <property type="interactions" value="156"/>
</dbReference>
<dbReference type="STRING" id="10116.ENSRNOP00000023613"/>
<dbReference type="iPTMnet" id="Q9Z244"/>
<dbReference type="PhosphoSitePlus" id="Q9Z244"/>
<dbReference type="jPOST" id="Q9Z244"/>
<dbReference type="PaxDb" id="10116-ENSRNOP00000023613"/>
<dbReference type="GeneID" id="117533"/>
<dbReference type="KEGG" id="rno:117533"/>
<dbReference type="AGR" id="RGD:70980"/>
<dbReference type="CTD" id="2766"/>
<dbReference type="RGD" id="70980">
    <property type="gene designation" value="Gmpr"/>
</dbReference>
<dbReference type="eggNOG" id="KOG2550">
    <property type="taxonomic scope" value="Eukaryota"/>
</dbReference>
<dbReference type="InParanoid" id="Q9Z244"/>
<dbReference type="PhylomeDB" id="Q9Z244"/>
<dbReference type="BRENDA" id="1.7.1.7">
    <property type="organism ID" value="5301"/>
</dbReference>
<dbReference type="Reactome" id="R-RNO-74217">
    <property type="pathway name" value="Purine salvage"/>
</dbReference>
<dbReference type="PRO" id="PR:Q9Z244"/>
<dbReference type="Proteomes" id="UP000002494">
    <property type="component" value="Unplaced"/>
</dbReference>
<dbReference type="GO" id="GO:1902560">
    <property type="term" value="C:GMP reductase complex"/>
    <property type="evidence" value="ECO:0007669"/>
    <property type="project" value="InterPro"/>
</dbReference>
<dbReference type="GO" id="GO:0003920">
    <property type="term" value="F:GMP reductase activity"/>
    <property type="evidence" value="ECO:0000266"/>
    <property type="project" value="RGD"/>
</dbReference>
<dbReference type="GO" id="GO:0046872">
    <property type="term" value="F:metal ion binding"/>
    <property type="evidence" value="ECO:0007669"/>
    <property type="project" value="UniProtKB-KW"/>
</dbReference>
<dbReference type="GO" id="GO:0006144">
    <property type="term" value="P:purine nucleobase metabolic process"/>
    <property type="evidence" value="ECO:0007669"/>
    <property type="project" value="UniProtKB-KW"/>
</dbReference>
<dbReference type="GO" id="GO:0006163">
    <property type="term" value="P:purine nucleotide metabolic process"/>
    <property type="evidence" value="ECO:0007669"/>
    <property type="project" value="UniProtKB-UniRule"/>
</dbReference>
<dbReference type="CDD" id="cd00381">
    <property type="entry name" value="IMPDH"/>
    <property type="match status" value="1"/>
</dbReference>
<dbReference type="FunFam" id="3.20.20.70:FF:000012">
    <property type="entry name" value="GMP reductase"/>
    <property type="match status" value="1"/>
</dbReference>
<dbReference type="Gene3D" id="3.20.20.70">
    <property type="entry name" value="Aldolase class I"/>
    <property type="match status" value="1"/>
</dbReference>
<dbReference type="HAMAP" id="MF_00596">
    <property type="entry name" value="GMP_reduct_type1"/>
    <property type="match status" value="1"/>
</dbReference>
<dbReference type="InterPro" id="IPR013785">
    <property type="entry name" value="Aldolase_TIM"/>
</dbReference>
<dbReference type="InterPro" id="IPR050139">
    <property type="entry name" value="GMP_reductase"/>
</dbReference>
<dbReference type="InterPro" id="IPR005993">
    <property type="entry name" value="GMPR"/>
</dbReference>
<dbReference type="InterPro" id="IPR015875">
    <property type="entry name" value="IMP_DH/GMP_Rdtase_CS"/>
</dbReference>
<dbReference type="InterPro" id="IPR001093">
    <property type="entry name" value="IMP_DH_GMPRt"/>
</dbReference>
<dbReference type="NCBIfam" id="TIGR01305">
    <property type="entry name" value="GMP_reduct_1"/>
    <property type="match status" value="1"/>
</dbReference>
<dbReference type="NCBIfam" id="NF003470">
    <property type="entry name" value="PRK05096.1"/>
    <property type="match status" value="1"/>
</dbReference>
<dbReference type="PANTHER" id="PTHR43170">
    <property type="entry name" value="GMP REDUCTASE"/>
    <property type="match status" value="1"/>
</dbReference>
<dbReference type="PANTHER" id="PTHR43170:SF3">
    <property type="entry name" value="GMP REDUCTASE 1"/>
    <property type="match status" value="1"/>
</dbReference>
<dbReference type="Pfam" id="PF00478">
    <property type="entry name" value="IMPDH"/>
    <property type="match status" value="1"/>
</dbReference>
<dbReference type="PIRSF" id="PIRSF000235">
    <property type="entry name" value="GMP_reductase"/>
    <property type="match status" value="1"/>
</dbReference>
<dbReference type="SMART" id="SM01240">
    <property type="entry name" value="IMPDH"/>
    <property type="match status" value="1"/>
</dbReference>
<dbReference type="SUPFAM" id="SSF51412">
    <property type="entry name" value="Inosine monophosphate dehydrogenase (IMPDH)"/>
    <property type="match status" value="1"/>
</dbReference>
<dbReference type="PROSITE" id="PS00487">
    <property type="entry name" value="IMP_DH_GMP_RED"/>
    <property type="match status" value="1"/>
</dbReference>
<feature type="chain" id="PRO_0000093725" description="GMP reductase 1">
    <location>
        <begin position="1"/>
        <end position="345"/>
    </location>
</feature>
<feature type="active site" description="Thioimidate intermediate" evidence="2">
    <location>
        <position position="186"/>
    </location>
</feature>
<feature type="active site" description="Proton donor/acceptor" evidence="2">
    <location>
        <position position="188"/>
    </location>
</feature>
<feature type="binding site" evidence="2">
    <location>
        <begin position="26"/>
        <end position="27"/>
    </location>
    <ligand>
        <name>NADP(+)</name>
        <dbReference type="ChEBI" id="CHEBI:58349"/>
        <note>ligand shared between two neighboring subunits</note>
    </ligand>
</feature>
<feature type="binding site" description="in other chain" evidence="2">
    <location>
        <position position="78"/>
    </location>
    <ligand>
        <name>NADP(+)</name>
        <dbReference type="ChEBI" id="CHEBI:58349"/>
        <note>ligand shared between two neighboring subunits</note>
    </ligand>
</feature>
<feature type="binding site" description="in other chain" evidence="2">
    <location>
        <begin position="129"/>
        <end position="131"/>
    </location>
    <ligand>
        <name>NADP(+)</name>
        <dbReference type="ChEBI" id="CHEBI:58349"/>
        <note>ligand shared between two neighboring subunits</note>
    </ligand>
</feature>
<feature type="binding site" description="in other chain" evidence="2">
    <location>
        <begin position="180"/>
        <end position="181"/>
    </location>
    <ligand>
        <name>NADP(+)</name>
        <dbReference type="ChEBI" id="CHEBI:58349"/>
        <note>ligand shared between two neighboring subunits</note>
    </ligand>
</feature>
<feature type="binding site" evidence="2">
    <location>
        <position position="181"/>
    </location>
    <ligand>
        <name>K(+)</name>
        <dbReference type="ChEBI" id="CHEBI:29103"/>
    </ligand>
</feature>
<feature type="binding site" evidence="2">
    <location>
        <position position="183"/>
    </location>
    <ligand>
        <name>K(+)</name>
        <dbReference type="ChEBI" id="CHEBI:29103"/>
    </ligand>
</feature>
<feature type="binding site" evidence="2">
    <location>
        <position position="186"/>
    </location>
    <ligand>
        <name>K(+)</name>
        <dbReference type="ChEBI" id="CHEBI:29103"/>
    </ligand>
</feature>
<feature type="binding site" evidence="2">
    <location>
        <position position="189"/>
    </location>
    <ligand>
        <name>K(+)</name>
        <dbReference type="ChEBI" id="CHEBI:29103"/>
    </ligand>
</feature>
<feature type="binding site" evidence="2">
    <location>
        <begin position="242"/>
        <end position="243"/>
    </location>
    <ligand>
        <name>GMP</name>
        <dbReference type="ChEBI" id="CHEBI:58115"/>
    </ligand>
</feature>
<feature type="binding site" evidence="2">
    <location>
        <begin position="268"/>
        <end position="270"/>
    </location>
    <ligand>
        <name>GMP</name>
        <dbReference type="ChEBI" id="CHEBI:58115"/>
    </ligand>
</feature>
<feature type="binding site" description="in other chain" evidence="2">
    <location>
        <position position="269"/>
    </location>
    <ligand>
        <name>NADP(+)</name>
        <dbReference type="ChEBI" id="CHEBI:58349"/>
        <note>ligand shared between two neighboring subunits</note>
    </ligand>
</feature>
<feature type="binding site" description="in other chain" evidence="2">
    <location>
        <begin position="285"/>
        <end position="286"/>
    </location>
    <ligand>
        <name>NADP(+)</name>
        <dbReference type="ChEBI" id="CHEBI:58349"/>
        <note>ligand shared between two neighboring subunits</note>
    </ligand>
</feature>
<feature type="binding site" evidence="2">
    <location>
        <begin position="286"/>
        <end position="290"/>
    </location>
    <ligand>
        <name>GMP</name>
        <dbReference type="ChEBI" id="CHEBI:58115"/>
    </ligand>
</feature>
<feature type="binding site" evidence="2">
    <location>
        <begin position="314"/>
        <end position="317"/>
    </location>
    <ligand>
        <name>NADP(+)</name>
        <dbReference type="ChEBI" id="CHEBI:58349"/>
        <note>ligand shared between two neighboring subunits</note>
    </ligand>
</feature>
<feature type="modified residue" description="Phosphoserine" evidence="1">
    <location>
        <position position="28"/>
    </location>
</feature>
<proteinExistence type="evidence at transcript level"/>
<sequence>MPRIDADLKLDFKDVLLRPKRSSLKSRSEVDLERTFTFRNSKQTYSGIPVIVANMDTVGTFEMAVVMSQHAMFTAIHKHYSLDDWKHFAENHPECLQHVAVSSGSGQNDLEKMSLILEAVPQVKFICLDVANGYSEHFVEFVKLVRSKFPEHTIMAGNVVTGEMVEELILSGADIIKVGVGPGSVCTTRTKTGVGYPQLSAVIECADSAHGLKGHIISDGSCTCPGDVAKAFGAGADFVMLGGMFSGHTECAGEVIERNGQKLKLFYGMSSDTAMKKHAGGVAEYRASEGKTVEVPYKGDVENTILDILGGLRSTCTYVGAAKLKELSRRATFIRVTQQHNTVFG</sequence>
<comment type="function">
    <text evidence="2">Catalyzes the irreversible NADPH-dependent deamination of GMP to IMP. It functions in the conversion of nucleobase, nucleoside and nucleotide derivatives of G to A nucleotides, and in maintaining the intracellular balance of A and G nucleotides.</text>
</comment>
<comment type="catalytic activity">
    <reaction evidence="2">
        <text>IMP + NH4(+) + NADP(+) = GMP + NADPH + 2 H(+)</text>
        <dbReference type="Rhea" id="RHEA:17185"/>
        <dbReference type="ChEBI" id="CHEBI:15378"/>
        <dbReference type="ChEBI" id="CHEBI:28938"/>
        <dbReference type="ChEBI" id="CHEBI:57783"/>
        <dbReference type="ChEBI" id="CHEBI:58053"/>
        <dbReference type="ChEBI" id="CHEBI:58115"/>
        <dbReference type="ChEBI" id="CHEBI:58349"/>
        <dbReference type="EC" id="1.7.1.7"/>
    </reaction>
</comment>
<comment type="subunit">
    <text evidence="2">Homotetramer.</text>
</comment>
<comment type="similarity">
    <text evidence="2">Belongs to the IMPDH/GMPR family. GuaC type 1 subfamily.</text>
</comment>
<protein>
    <recommendedName>
        <fullName evidence="2">GMP reductase 1</fullName>
        <shortName evidence="2">GMPR 1</shortName>
        <ecNumber evidence="2">1.7.1.7</ecNumber>
    </recommendedName>
    <alternativeName>
        <fullName evidence="2">Guanosine 5'-monophosphate oxidoreductase 1</fullName>
        <shortName evidence="2">Guanosine monophosphate reductase 1</shortName>
    </alternativeName>
</protein>
<keyword id="KW-0479">Metal-binding</keyword>
<keyword id="KW-0521">NADP</keyword>
<keyword id="KW-0560">Oxidoreductase</keyword>
<keyword id="KW-0597">Phosphoprotein</keyword>
<keyword id="KW-0630">Potassium</keyword>
<keyword id="KW-0659">Purine metabolism</keyword>
<keyword id="KW-1185">Reference proteome</keyword>